<feature type="chain" id="PRO_0000322456" description="Kazrin-A">
    <location>
        <begin position="1"/>
        <end position="786"/>
    </location>
</feature>
<feature type="domain" description="SAM 1" evidence="2">
    <location>
        <begin position="457"/>
        <end position="522"/>
    </location>
</feature>
<feature type="domain" description="SAM 2" evidence="2">
    <location>
        <begin position="535"/>
        <end position="599"/>
    </location>
</feature>
<feature type="domain" description="SAM 3" evidence="2">
    <location>
        <begin position="623"/>
        <end position="686"/>
    </location>
</feature>
<feature type="region of interest" description="Disordered" evidence="3">
    <location>
        <begin position="44"/>
        <end position="70"/>
    </location>
</feature>
<feature type="region of interest" description="Disordered" evidence="3">
    <location>
        <begin position="350"/>
        <end position="425"/>
    </location>
</feature>
<feature type="region of interest" description="Disordered" evidence="3">
    <location>
        <begin position="703"/>
        <end position="760"/>
    </location>
</feature>
<feature type="coiled-coil region" evidence="1">
    <location>
        <begin position="92"/>
        <end position="270"/>
    </location>
</feature>
<feature type="compositionally biased region" description="Low complexity" evidence="3">
    <location>
        <begin position="52"/>
        <end position="62"/>
    </location>
</feature>
<feature type="compositionally biased region" description="Polar residues" evidence="3">
    <location>
        <begin position="742"/>
        <end position="758"/>
    </location>
</feature>
<keyword id="KW-0175">Coiled coil</keyword>
<keyword id="KW-1185">Reference proteome</keyword>
<keyword id="KW-0677">Repeat</keyword>
<dbReference type="EMBL" id="CR936926">
    <property type="protein sequence ID" value="CAP19584.1"/>
    <property type="molecule type" value="Genomic_DNA"/>
</dbReference>
<dbReference type="EMBL" id="CT573404">
    <property type="protein sequence ID" value="CAP19584.1"/>
    <property type="status" value="JOINED"/>
    <property type="molecule type" value="Genomic_DNA"/>
</dbReference>
<dbReference type="RefSeq" id="NP_001121761.1">
    <property type="nucleotide sequence ID" value="NM_001128289.1"/>
</dbReference>
<dbReference type="SMR" id="A9C3W3"/>
<dbReference type="FunCoup" id="A9C3W3">
    <property type="interactions" value="533"/>
</dbReference>
<dbReference type="STRING" id="7955.ENSDARP00000120248"/>
<dbReference type="PaxDb" id="7955-ENSDARP00000098625"/>
<dbReference type="Ensembl" id="ENSDART00000139787">
    <property type="protein sequence ID" value="ENSDARP00000120248"/>
    <property type="gene ID" value="ENSDARG00000076923"/>
</dbReference>
<dbReference type="GeneID" id="100003663"/>
<dbReference type="KEGG" id="dre:100003663"/>
<dbReference type="AGR" id="ZFIN:ZDB-GENE-081105-97"/>
<dbReference type="CTD" id="100003663"/>
<dbReference type="ZFIN" id="ZDB-GENE-081105-97">
    <property type="gene designation" value="kazna"/>
</dbReference>
<dbReference type="eggNOG" id="KOG0249">
    <property type="taxonomic scope" value="Eukaryota"/>
</dbReference>
<dbReference type="HOGENOM" id="CLU_010768_2_0_1"/>
<dbReference type="InParanoid" id="A9C3W3"/>
<dbReference type="OMA" id="RVQCEHQ"/>
<dbReference type="OrthoDB" id="6430345at2759"/>
<dbReference type="PhylomeDB" id="A9C3W3"/>
<dbReference type="PRO" id="PR:A9C3W3"/>
<dbReference type="Proteomes" id="UP000000437">
    <property type="component" value="Alternate scaffold 8"/>
</dbReference>
<dbReference type="Proteomes" id="UP000000437">
    <property type="component" value="Chromosome 8"/>
</dbReference>
<dbReference type="Bgee" id="ENSDARG00000076923">
    <property type="expression patterns" value="Expressed in muscle tissue and 19 other cell types or tissues"/>
</dbReference>
<dbReference type="CDD" id="cd09567">
    <property type="entry name" value="SAM_kazrin_repeat2"/>
    <property type="match status" value="1"/>
</dbReference>
<dbReference type="CDD" id="cd09570">
    <property type="entry name" value="SAM_kazrin_repeat3"/>
    <property type="match status" value="1"/>
</dbReference>
<dbReference type="Gene3D" id="1.10.287.1490">
    <property type="match status" value="1"/>
</dbReference>
<dbReference type="Gene3D" id="1.10.150.50">
    <property type="entry name" value="Transcription Factor, Ets-1"/>
    <property type="match status" value="3"/>
</dbReference>
<dbReference type="InterPro" id="IPR037614">
    <property type="entry name" value="Kazrin"/>
</dbReference>
<dbReference type="InterPro" id="IPR037615">
    <property type="entry name" value="Kazrin_SAM_rpt_2"/>
</dbReference>
<dbReference type="InterPro" id="IPR037616">
    <property type="entry name" value="Kazrin_SAM_rpt_3"/>
</dbReference>
<dbReference type="InterPro" id="IPR001660">
    <property type="entry name" value="SAM"/>
</dbReference>
<dbReference type="InterPro" id="IPR013761">
    <property type="entry name" value="SAM/pointed_sf"/>
</dbReference>
<dbReference type="PANTHER" id="PTHR12776:SF3">
    <property type="entry name" value="KAZRIN-A"/>
    <property type="match status" value="1"/>
</dbReference>
<dbReference type="PANTHER" id="PTHR12776">
    <property type="entry name" value="KAZRIN-RELATED"/>
    <property type="match status" value="1"/>
</dbReference>
<dbReference type="Pfam" id="PF00536">
    <property type="entry name" value="SAM_1"/>
    <property type="match status" value="2"/>
</dbReference>
<dbReference type="Pfam" id="PF07647">
    <property type="entry name" value="SAM_2"/>
    <property type="match status" value="1"/>
</dbReference>
<dbReference type="SMART" id="SM00454">
    <property type="entry name" value="SAM"/>
    <property type="match status" value="3"/>
</dbReference>
<dbReference type="SUPFAM" id="SSF47769">
    <property type="entry name" value="SAM/Pointed domain"/>
    <property type="match status" value="2"/>
</dbReference>
<dbReference type="PROSITE" id="PS50105">
    <property type="entry name" value="SAM_DOMAIN"/>
    <property type="match status" value="2"/>
</dbReference>
<organism>
    <name type="scientific">Danio rerio</name>
    <name type="common">Zebrafish</name>
    <name type="synonym">Brachydanio rerio</name>
    <dbReference type="NCBI Taxonomy" id="7955"/>
    <lineage>
        <taxon>Eukaryota</taxon>
        <taxon>Metazoa</taxon>
        <taxon>Chordata</taxon>
        <taxon>Craniata</taxon>
        <taxon>Vertebrata</taxon>
        <taxon>Euteleostomi</taxon>
        <taxon>Actinopterygii</taxon>
        <taxon>Neopterygii</taxon>
        <taxon>Teleostei</taxon>
        <taxon>Ostariophysi</taxon>
        <taxon>Cypriniformes</taxon>
        <taxon>Danionidae</taxon>
        <taxon>Danioninae</taxon>
        <taxon>Danio</taxon>
    </lineage>
</organism>
<reference key="1">
    <citation type="journal article" date="2013" name="Nature">
        <title>The zebrafish reference genome sequence and its relationship to the human genome.</title>
        <authorList>
            <person name="Howe K."/>
            <person name="Clark M.D."/>
            <person name="Torroja C.F."/>
            <person name="Torrance J."/>
            <person name="Berthelot C."/>
            <person name="Muffato M."/>
            <person name="Collins J.E."/>
            <person name="Humphray S."/>
            <person name="McLaren K."/>
            <person name="Matthews L."/>
            <person name="McLaren S."/>
            <person name="Sealy I."/>
            <person name="Caccamo M."/>
            <person name="Churcher C."/>
            <person name="Scott C."/>
            <person name="Barrett J.C."/>
            <person name="Koch R."/>
            <person name="Rauch G.J."/>
            <person name="White S."/>
            <person name="Chow W."/>
            <person name="Kilian B."/>
            <person name="Quintais L.T."/>
            <person name="Guerra-Assuncao J.A."/>
            <person name="Zhou Y."/>
            <person name="Gu Y."/>
            <person name="Yen J."/>
            <person name="Vogel J.H."/>
            <person name="Eyre T."/>
            <person name="Redmond S."/>
            <person name="Banerjee R."/>
            <person name="Chi J."/>
            <person name="Fu B."/>
            <person name="Langley E."/>
            <person name="Maguire S.F."/>
            <person name="Laird G.K."/>
            <person name="Lloyd D."/>
            <person name="Kenyon E."/>
            <person name="Donaldson S."/>
            <person name="Sehra H."/>
            <person name="Almeida-King J."/>
            <person name="Loveland J."/>
            <person name="Trevanion S."/>
            <person name="Jones M."/>
            <person name="Quail M."/>
            <person name="Willey D."/>
            <person name="Hunt A."/>
            <person name="Burton J."/>
            <person name="Sims S."/>
            <person name="McLay K."/>
            <person name="Plumb B."/>
            <person name="Davis J."/>
            <person name="Clee C."/>
            <person name="Oliver K."/>
            <person name="Clark R."/>
            <person name="Riddle C."/>
            <person name="Elliot D."/>
            <person name="Threadgold G."/>
            <person name="Harden G."/>
            <person name="Ware D."/>
            <person name="Begum S."/>
            <person name="Mortimore B."/>
            <person name="Kerry G."/>
            <person name="Heath P."/>
            <person name="Phillimore B."/>
            <person name="Tracey A."/>
            <person name="Corby N."/>
            <person name="Dunn M."/>
            <person name="Johnson C."/>
            <person name="Wood J."/>
            <person name="Clark S."/>
            <person name="Pelan S."/>
            <person name="Griffiths G."/>
            <person name="Smith M."/>
            <person name="Glithero R."/>
            <person name="Howden P."/>
            <person name="Barker N."/>
            <person name="Lloyd C."/>
            <person name="Stevens C."/>
            <person name="Harley J."/>
            <person name="Holt K."/>
            <person name="Panagiotidis G."/>
            <person name="Lovell J."/>
            <person name="Beasley H."/>
            <person name="Henderson C."/>
            <person name="Gordon D."/>
            <person name="Auger K."/>
            <person name="Wright D."/>
            <person name="Collins J."/>
            <person name="Raisen C."/>
            <person name="Dyer L."/>
            <person name="Leung K."/>
            <person name="Robertson L."/>
            <person name="Ambridge K."/>
            <person name="Leongamornlert D."/>
            <person name="McGuire S."/>
            <person name="Gilderthorp R."/>
            <person name="Griffiths C."/>
            <person name="Manthravadi D."/>
            <person name="Nichol S."/>
            <person name="Barker G."/>
            <person name="Whitehead S."/>
            <person name="Kay M."/>
            <person name="Brown J."/>
            <person name="Murnane C."/>
            <person name="Gray E."/>
            <person name="Humphries M."/>
            <person name="Sycamore N."/>
            <person name="Barker D."/>
            <person name="Saunders D."/>
            <person name="Wallis J."/>
            <person name="Babbage A."/>
            <person name="Hammond S."/>
            <person name="Mashreghi-Mohammadi M."/>
            <person name="Barr L."/>
            <person name="Martin S."/>
            <person name="Wray P."/>
            <person name="Ellington A."/>
            <person name="Matthews N."/>
            <person name="Ellwood M."/>
            <person name="Woodmansey R."/>
            <person name="Clark G."/>
            <person name="Cooper J."/>
            <person name="Tromans A."/>
            <person name="Grafham D."/>
            <person name="Skuce C."/>
            <person name="Pandian R."/>
            <person name="Andrews R."/>
            <person name="Harrison E."/>
            <person name="Kimberley A."/>
            <person name="Garnett J."/>
            <person name="Fosker N."/>
            <person name="Hall R."/>
            <person name="Garner P."/>
            <person name="Kelly D."/>
            <person name="Bird C."/>
            <person name="Palmer S."/>
            <person name="Gehring I."/>
            <person name="Berger A."/>
            <person name="Dooley C.M."/>
            <person name="Ersan-Urun Z."/>
            <person name="Eser C."/>
            <person name="Geiger H."/>
            <person name="Geisler M."/>
            <person name="Karotki L."/>
            <person name="Kirn A."/>
            <person name="Konantz J."/>
            <person name="Konantz M."/>
            <person name="Oberlander M."/>
            <person name="Rudolph-Geiger S."/>
            <person name="Teucke M."/>
            <person name="Lanz C."/>
            <person name="Raddatz G."/>
            <person name="Osoegawa K."/>
            <person name="Zhu B."/>
            <person name="Rapp A."/>
            <person name="Widaa S."/>
            <person name="Langford C."/>
            <person name="Yang F."/>
            <person name="Schuster S.C."/>
            <person name="Carter N.P."/>
            <person name="Harrow J."/>
            <person name="Ning Z."/>
            <person name="Herrero J."/>
            <person name="Searle S.M."/>
            <person name="Enright A."/>
            <person name="Geisler R."/>
            <person name="Plasterk R.H."/>
            <person name="Lee C."/>
            <person name="Westerfield M."/>
            <person name="de Jong P.J."/>
            <person name="Zon L.I."/>
            <person name="Postlethwait J.H."/>
            <person name="Nusslein-Volhard C."/>
            <person name="Hubbard T.J."/>
            <person name="Roest Crollius H."/>
            <person name="Rogers J."/>
            <person name="Stemple D.L."/>
        </authorList>
    </citation>
    <scope>NUCLEOTIDE SEQUENCE [LARGE SCALE GENOMIC DNA]</scope>
    <source>
        <strain>Tuebingen</strain>
    </source>
</reference>
<sequence length="786" mass="88931">MMEENKQLAQRIDGAIQCAKQDVANLRAELTATGHRLAELGELEEPGEPQEHQQQQQQQNHQDAPVQRQKALTELGQKGDVASQETSLDKVLLHEEVLRLQEEVSVLKQVREMLNRELEETGGGCSVELMSVSQLRVQLTQKEQELDRAKEALQAMKTDRKRLRLERTDLVNQMQQLYTTLESREEQLRDFIRNYEQHRKESEDAVRVLAREKDLLEREKWDLRRQTKEATEHAGALRSALDLKESRIKELEAELTMAKQSLATLTKDVPKRHSLAMPTETVVNGNQEWAMHAELPLTAAIRQSQQNLYHSIDRQVLKASPCVCDGDGISMMSSAAARISPCHSKQASVMSDASVMEGERSSTPSDSPRHRTHSLCNSLEDLEEQRRRKKKERMGLGSLSRVFGRGKQRKSMDPTLFDDSDSLSSPARLSVSLSECEEQLDRLQQVELARSAPMCRWRAGTVQAWLEVIMAMPMYMRACADNVKSGKVLLVLTDEDLGNVLGISNSMHRRKLRLAIEDYRDAEAGHGLSKAAELDHHWVAQAWLTDVGLPQYSQFFHTHLVDGRLLSTLTRADLEKHLHVSKKAHQNSLLLGIQLLHTLNFDKEILQSRRSECENQNTDPAVWTCQRIIKWIKEIDLKEFADNLQTSGVHGAVMVLDPSFRSDTMATALCIPSNKHMVRHHLSEEMKALVSAARAGLEQEVEPLGTPPTLHRQSSLSSSSPSCHDDQQSLRRVKQQLGLSPKNLTARNISHQSRSGSFPRNGLQEVSLQRERCPVRHFSAAELTNV</sequence>
<proteinExistence type="inferred from homology"/>
<accession>A9C3W3</accession>
<name>KAZRA_DANRE</name>
<protein>
    <recommendedName>
        <fullName>Kazrin-A</fullName>
    </recommendedName>
</protein>
<gene>
    <name type="primary">kazna</name>
    <name type="synonym">kaza</name>
    <name type="ORF">si:dkey-159f12.3</name>
</gene>
<comment type="similarity">
    <text evidence="4">Belongs to the kazrin family.</text>
</comment>
<evidence type="ECO:0000255" key="1"/>
<evidence type="ECO:0000255" key="2">
    <source>
        <dbReference type="PROSITE-ProRule" id="PRU00184"/>
    </source>
</evidence>
<evidence type="ECO:0000256" key="3">
    <source>
        <dbReference type="SAM" id="MobiDB-lite"/>
    </source>
</evidence>
<evidence type="ECO:0000305" key="4"/>